<feature type="chain" id="PRO_0000384903" description="Uncharacterized protein ORF4">
    <location>
        <begin position="1"/>
        <end position="48"/>
    </location>
</feature>
<organism>
    <name type="scientific">His1 virus (isolate Australia/Victoria)</name>
    <name type="common">His1V</name>
    <name type="synonym">Haloarcula hispanica virus 1</name>
    <dbReference type="NCBI Taxonomy" id="654912"/>
    <lineage>
        <taxon>Viruses</taxon>
        <taxon>Viruses incertae sedis</taxon>
        <taxon>Halspiviridae</taxon>
        <taxon>Salterprovirus</taxon>
        <taxon>Salterprovirus His1</taxon>
    </lineage>
</organism>
<organismHost>
    <name type="scientific">Haloarcula hispanica</name>
    <dbReference type="NCBI Taxonomy" id="51589"/>
</organismHost>
<gene>
    <name type="ORF">ORF4</name>
</gene>
<protein>
    <recommendedName>
        <fullName>Uncharacterized protein ORF4</fullName>
    </recommendedName>
</protein>
<dbReference type="EMBL" id="AF191796">
    <property type="protein sequence ID" value="AAQ13719.1"/>
    <property type="molecule type" value="Genomic_DNA"/>
</dbReference>
<dbReference type="RefSeq" id="YP_529516.1">
    <property type="nucleotide sequence ID" value="NC_007914.1"/>
</dbReference>
<dbReference type="SMR" id="Q25BJ1"/>
<dbReference type="KEGG" id="vg:5142416"/>
<dbReference type="Proteomes" id="UP000007024">
    <property type="component" value="Segment"/>
</dbReference>
<accession>Q25BJ1</accession>
<sequence>MTNKKNWKCAGCKNRYSSFDKEKKDGQLKFNCPNCGHTVRRYTILGGY</sequence>
<reference key="1">
    <citation type="journal article" date="2006" name="Virology">
        <title>His1 and His2 are distantly related, spindle-shaped haloviruses belonging to the novel virus group, Salterprovirus.</title>
        <authorList>
            <person name="Bath C."/>
            <person name="Cukalac T."/>
            <person name="Porter K."/>
            <person name="Dyall-Smith M.L."/>
        </authorList>
    </citation>
    <scope>NUCLEOTIDE SEQUENCE [GENOMIC DNA]</scope>
</reference>
<keyword id="KW-1185">Reference proteome</keyword>
<proteinExistence type="predicted"/>
<name>Y04_HIS1I</name>